<dbReference type="EC" id="2.8.1.4" evidence="1"/>
<dbReference type="EMBL" id="CP000764">
    <property type="protein sequence ID" value="ABS23536.1"/>
    <property type="molecule type" value="Genomic_DNA"/>
</dbReference>
<dbReference type="RefSeq" id="WP_012095777.1">
    <property type="nucleotide sequence ID" value="NC_009674.1"/>
</dbReference>
<dbReference type="SMR" id="A7GTS8"/>
<dbReference type="STRING" id="315749.Bcer98_3319"/>
<dbReference type="GeneID" id="33898564"/>
<dbReference type="KEGG" id="bcy:Bcer98_3319"/>
<dbReference type="eggNOG" id="COG0301">
    <property type="taxonomic scope" value="Bacteria"/>
</dbReference>
<dbReference type="HOGENOM" id="CLU_037952_4_0_9"/>
<dbReference type="OrthoDB" id="9773948at2"/>
<dbReference type="UniPathway" id="UPA00060"/>
<dbReference type="Proteomes" id="UP000002300">
    <property type="component" value="Chromosome"/>
</dbReference>
<dbReference type="GO" id="GO:0005829">
    <property type="term" value="C:cytosol"/>
    <property type="evidence" value="ECO:0007669"/>
    <property type="project" value="TreeGrafter"/>
</dbReference>
<dbReference type="GO" id="GO:0005524">
    <property type="term" value="F:ATP binding"/>
    <property type="evidence" value="ECO:0007669"/>
    <property type="project" value="UniProtKB-UniRule"/>
</dbReference>
<dbReference type="GO" id="GO:0004810">
    <property type="term" value="F:CCA tRNA nucleotidyltransferase activity"/>
    <property type="evidence" value="ECO:0007669"/>
    <property type="project" value="InterPro"/>
</dbReference>
<dbReference type="GO" id="GO:0000049">
    <property type="term" value="F:tRNA binding"/>
    <property type="evidence" value="ECO:0007669"/>
    <property type="project" value="UniProtKB-UniRule"/>
</dbReference>
<dbReference type="GO" id="GO:0140741">
    <property type="term" value="F:tRNA-uracil-4 sulfurtransferase activity"/>
    <property type="evidence" value="ECO:0007669"/>
    <property type="project" value="UniProtKB-EC"/>
</dbReference>
<dbReference type="GO" id="GO:0009228">
    <property type="term" value="P:thiamine biosynthetic process"/>
    <property type="evidence" value="ECO:0007669"/>
    <property type="project" value="UniProtKB-KW"/>
</dbReference>
<dbReference type="GO" id="GO:0009229">
    <property type="term" value="P:thiamine diphosphate biosynthetic process"/>
    <property type="evidence" value="ECO:0007669"/>
    <property type="project" value="UniProtKB-UniRule"/>
</dbReference>
<dbReference type="GO" id="GO:0052837">
    <property type="term" value="P:thiazole biosynthetic process"/>
    <property type="evidence" value="ECO:0007669"/>
    <property type="project" value="TreeGrafter"/>
</dbReference>
<dbReference type="GO" id="GO:0002937">
    <property type="term" value="P:tRNA 4-thiouridine biosynthesis"/>
    <property type="evidence" value="ECO:0007669"/>
    <property type="project" value="TreeGrafter"/>
</dbReference>
<dbReference type="CDD" id="cd01712">
    <property type="entry name" value="PPase_ThiI"/>
    <property type="match status" value="1"/>
</dbReference>
<dbReference type="CDD" id="cd11716">
    <property type="entry name" value="THUMP_ThiI"/>
    <property type="match status" value="1"/>
</dbReference>
<dbReference type="FunFam" id="3.30.2130.30:FF:000003">
    <property type="entry name" value="Probable tRNA sulfurtransferase"/>
    <property type="match status" value="1"/>
</dbReference>
<dbReference type="FunFam" id="3.40.50.620:FF:000053">
    <property type="entry name" value="Probable tRNA sulfurtransferase"/>
    <property type="match status" value="1"/>
</dbReference>
<dbReference type="Gene3D" id="3.30.2130.30">
    <property type="match status" value="1"/>
</dbReference>
<dbReference type="Gene3D" id="3.40.50.620">
    <property type="entry name" value="HUPs"/>
    <property type="match status" value="1"/>
</dbReference>
<dbReference type="HAMAP" id="MF_00021">
    <property type="entry name" value="ThiI"/>
    <property type="match status" value="1"/>
</dbReference>
<dbReference type="InterPro" id="IPR014729">
    <property type="entry name" value="Rossmann-like_a/b/a_fold"/>
</dbReference>
<dbReference type="InterPro" id="IPR020536">
    <property type="entry name" value="ThiI_AANH"/>
</dbReference>
<dbReference type="InterPro" id="IPR054173">
    <property type="entry name" value="ThiI_fer"/>
</dbReference>
<dbReference type="InterPro" id="IPR049961">
    <property type="entry name" value="ThiI_N"/>
</dbReference>
<dbReference type="InterPro" id="IPR004114">
    <property type="entry name" value="THUMP_dom"/>
</dbReference>
<dbReference type="InterPro" id="IPR049962">
    <property type="entry name" value="THUMP_ThiI"/>
</dbReference>
<dbReference type="InterPro" id="IPR003720">
    <property type="entry name" value="tRNA_STrfase"/>
</dbReference>
<dbReference type="InterPro" id="IPR050102">
    <property type="entry name" value="tRNA_sulfurtransferase_ThiI"/>
</dbReference>
<dbReference type="NCBIfam" id="TIGR00342">
    <property type="entry name" value="tRNA uracil 4-sulfurtransferase ThiI"/>
    <property type="match status" value="1"/>
</dbReference>
<dbReference type="PANTHER" id="PTHR43209">
    <property type="entry name" value="TRNA SULFURTRANSFERASE"/>
    <property type="match status" value="1"/>
</dbReference>
<dbReference type="PANTHER" id="PTHR43209:SF1">
    <property type="entry name" value="TRNA SULFURTRANSFERASE"/>
    <property type="match status" value="1"/>
</dbReference>
<dbReference type="Pfam" id="PF02568">
    <property type="entry name" value="ThiI"/>
    <property type="match status" value="1"/>
</dbReference>
<dbReference type="Pfam" id="PF22025">
    <property type="entry name" value="ThiI_fer"/>
    <property type="match status" value="1"/>
</dbReference>
<dbReference type="Pfam" id="PF02926">
    <property type="entry name" value="THUMP"/>
    <property type="match status" value="1"/>
</dbReference>
<dbReference type="SMART" id="SM00981">
    <property type="entry name" value="THUMP"/>
    <property type="match status" value="1"/>
</dbReference>
<dbReference type="SUPFAM" id="SSF52402">
    <property type="entry name" value="Adenine nucleotide alpha hydrolases-like"/>
    <property type="match status" value="1"/>
</dbReference>
<dbReference type="SUPFAM" id="SSF143437">
    <property type="entry name" value="THUMP domain-like"/>
    <property type="match status" value="1"/>
</dbReference>
<dbReference type="PROSITE" id="PS51165">
    <property type="entry name" value="THUMP"/>
    <property type="match status" value="1"/>
</dbReference>
<name>THII_BACCN</name>
<sequence>MMKYDHILVRYGEMTTKGKNRSKFVSTLKDNVKFKLKKFPNIKINATHDRMYIELNGEDHEAIAESLKDVFGIHKFNLAMKVPSELEEIKKGALAAFLLIKKPVKTFKITVHRSYKHFPMQTMELLPEIGGYVLENTEDIMVDVHNPDVNIRIEIRSGYSYIMCDERMGAGGLPVGVGGKVMVLLSGGIDSPVAAYLTMKRGVSVEAVHFHSPPFTSERAKQKVIDLAQELTKYCKRVTLHLVPFTEVQKTINKEIPSSYTMTVMRRMMMRITERIAEERNALAITTGESLGQVASQTLDSMHTINEVTNYPVLRPLITMDKLEIIKIANEIGTYDISIRPYEDCCTVFTPANPATKPKREKASRFEAKYDFTPLLEQAVANTETMVLQTVDKAEEDQFEDLF</sequence>
<organism>
    <name type="scientific">Bacillus cytotoxicus (strain DSM 22905 / CIP 110041 / 391-98 / NVH 391-98)</name>
    <dbReference type="NCBI Taxonomy" id="315749"/>
    <lineage>
        <taxon>Bacteria</taxon>
        <taxon>Bacillati</taxon>
        <taxon>Bacillota</taxon>
        <taxon>Bacilli</taxon>
        <taxon>Bacillales</taxon>
        <taxon>Bacillaceae</taxon>
        <taxon>Bacillus</taxon>
        <taxon>Bacillus cereus group</taxon>
    </lineage>
</organism>
<accession>A7GTS8</accession>
<comment type="function">
    <text evidence="1">Catalyzes the ATP-dependent transfer of a sulfur to tRNA to produce 4-thiouridine in position 8 of tRNAs, which functions as a near-UV photosensor. Also catalyzes the transfer of sulfur to the sulfur carrier protein ThiS, forming ThiS-thiocarboxylate. This is a step in the synthesis of thiazole, in the thiamine biosynthesis pathway. The sulfur is donated as persulfide by IscS.</text>
</comment>
<comment type="catalytic activity">
    <reaction evidence="1">
        <text>[ThiI sulfur-carrier protein]-S-sulfanyl-L-cysteine + a uridine in tRNA + 2 reduced [2Fe-2S]-[ferredoxin] + ATP + H(+) = [ThiI sulfur-carrier protein]-L-cysteine + a 4-thiouridine in tRNA + 2 oxidized [2Fe-2S]-[ferredoxin] + AMP + diphosphate</text>
        <dbReference type="Rhea" id="RHEA:24176"/>
        <dbReference type="Rhea" id="RHEA-COMP:10000"/>
        <dbReference type="Rhea" id="RHEA-COMP:10001"/>
        <dbReference type="Rhea" id="RHEA-COMP:13337"/>
        <dbReference type="Rhea" id="RHEA-COMP:13338"/>
        <dbReference type="Rhea" id="RHEA-COMP:13339"/>
        <dbReference type="Rhea" id="RHEA-COMP:13340"/>
        <dbReference type="ChEBI" id="CHEBI:15378"/>
        <dbReference type="ChEBI" id="CHEBI:29950"/>
        <dbReference type="ChEBI" id="CHEBI:30616"/>
        <dbReference type="ChEBI" id="CHEBI:33019"/>
        <dbReference type="ChEBI" id="CHEBI:33737"/>
        <dbReference type="ChEBI" id="CHEBI:33738"/>
        <dbReference type="ChEBI" id="CHEBI:61963"/>
        <dbReference type="ChEBI" id="CHEBI:65315"/>
        <dbReference type="ChEBI" id="CHEBI:136798"/>
        <dbReference type="ChEBI" id="CHEBI:456215"/>
        <dbReference type="EC" id="2.8.1.4"/>
    </reaction>
</comment>
<comment type="catalytic activity">
    <reaction evidence="1">
        <text>[ThiS sulfur-carrier protein]-C-terminal Gly-Gly-AMP + S-sulfanyl-L-cysteinyl-[cysteine desulfurase] + AH2 = [ThiS sulfur-carrier protein]-C-terminal-Gly-aminoethanethioate + L-cysteinyl-[cysteine desulfurase] + A + AMP + 2 H(+)</text>
        <dbReference type="Rhea" id="RHEA:43340"/>
        <dbReference type="Rhea" id="RHEA-COMP:12157"/>
        <dbReference type="Rhea" id="RHEA-COMP:12158"/>
        <dbReference type="Rhea" id="RHEA-COMP:12910"/>
        <dbReference type="Rhea" id="RHEA-COMP:19908"/>
        <dbReference type="ChEBI" id="CHEBI:13193"/>
        <dbReference type="ChEBI" id="CHEBI:15378"/>
        <dbReference type="ChEBI" id="CHEBI:17499"/>
        <dbReference type="ChEBI" id="CHEBI:29950"/>
        <dbReference type="ChEBI" id="CHEBI:61963"/>
        <dbReference type="ChEBI" id="CHEBI:90618"/>
        <dbReference type="ChEBI" id="CHEBI:232372"/>
        <dbReference type="ChEBI" id="CHEBI:456215"/>
    </reaction>
</comment>
<comment type="pathway">
    <text evidence="1">Cofactor biosynthesis; thiamine diphosphate biosynthesis.</text>
</comment>
<comment type="subcellular location">
    <subcellularLocation>
        <location evidence="1">Cytoplasm</location>
    </subcellularLocation>
</comment>
<comment type="similarity">
    <text evidence="1">Belongs to the ThiI family.</text>
</comment>
<reference key="1">
    <citation type="journal article" date="2008" name="Chem. Biol. Interact.">
        <title>Extending the Bacillus cereus group genomics to putative food-borne pathogens of different toxicity.</title>
        <authorList>
            <person name="Lapidus A."/>
            <person name="Goltsman E."/>
            <person name="Auger S."/>
            <person name="Galleron N."/>
            <person name="Segurens B."/>
            <person name="Dossat C."/>
            <person name="Land M.L."/>
            <person name="Broussolle V."/>
            <person name="Brillard J."/>
            <person name="Guinebretiere M.-H."/>
            <person name="Sanchis V."/>
            <person name="Nguen-the C."/>
            <person name="Lereclus D."/>
            <person name="Richardson P."/>
            <person name="Wincker P."/>
            <person name="Weissenbach J."/>
            <person name="Ehrlich S.D."/>
            <person name="Sorokin A."/>
        </authorList>
    </citation>
    <scope>NUCLEOTIDE SEQUENCE [LARGE SCALE GENOMIC DNA]</scope>
    <source>
        <strain>DSM 22905 / CIP 110041 / 391-98 / NVH 391-98</strain>
    </source>
</reference>
<evidence type="ECO:0000255" key="1">
    <source>
        <dbReference type="HAMAP-Rule" id="MF_00021"/>
    </source>
</evidence>
<proteinExistence type="inferred from homology"/>
<keyword id="KW-0067">ATP-binding</keyword>
<keyword id="KW-0963">Cytoplasm</keyword>
<keyword id="KW-0547">Nucleotide-binding</keyword>
<keyword id="KW-0694">RNA-binding</keyword>
<keyword id="KW-0784">Thiamine biosynthesis</keyword>
<keyword id="KW-0808">Transferase</keyword>
<keyword id="KW-0820">tRNA-binding</keyword>
<protein>
    <recommendedName>
        <fullName evidence="1">Probable tRNA sulfurtransferase</fullName>
        <ecNumber evidence="1">2.8.1.4</ecNumber>
    </recommendedName>
    <alternativeName>
        <fullName evidence="1">Sulfur carrier protein ThiS sulfurtransferase</fullName>
    </alternativeName>
    <alternativeName>
        <fullName evidence="1">Thiamine biosynthesis protein ThiI</fullName>
    </alternativeName>
    <alternativeName>
        <fullName evidence="1">tRNA 4-thiouridine synthase</fullName>
    </alternativeName>
</protein>
<gene>
    <name evidence="1" type="primary">thiI</name>
    <name type="ordered locus">Bcer98_3319</name>
</gene>
<feature type="chain" id="PRO_1000074205" description="Probable tRNA sulfurtransferase">
    <location>
        <begin position="1"/>
        <end position="403"/>
    </location>
</feature>
<feature type="domain" description="THUMP" evidence="1">
    <location>
        <begin position="61"/>
        <end position="166"/>
    </location>
</feature>
<feature type="binding site" evidence="1">
    <location>
        <begin position="184"/>
        <end position="185"/>
    </location>
    <ligand>
        <name>ATP</name>
        <dbReference type="ChEBI" id="CHEBI:30616"/>
    </ligand>
</feature>
<feature type="binding site" evidence="1">
    <location>
        <begin position="209"/>
        <end position="210"/>
    </location>
    <ligand>
        <name>ATP</name>
        <dbReference type="ChEBI" id="CHEBI:30616"/>
    </ligand>
</feature>
<feature type="binding site" evidence="1">
    <location>
        <position position="266"/>
    </location>
    <ligand>
        <name>ATP</name>
        <dbReference type="ChEBI" id="CHEBI:30616"/>
    </ligand>
</feature>
<feature type="binding site" evidence="1">
    <location>
        <position position="288"/>
    </location>
    <ligand>
        <name>ATP</name>
        <dbReference type="ChEBI" id="CHEBI:30616"/>
    </ligand>
</feature>
<feature type="binding site" evidence="1">
    <location>
        <position position="297"/>
    </location>
    <ligand>
        <name>ATP</name>
        <dbReference type="ChEBI" id="CHEBI:30616"/>
    </ligand>
</feature>